<gene>
    <name type="ordered locus">YPA_2295</name>
</gene>
<accession>Q1C5L2</accession>
<protein>
    <recommendedName>
        <fullName evidence="1">Probable lipid kinase YegS-like</fullName>
        <ecNumber evidence="1">2.7.1.-</ecNumber>
    </recommendedName>
</protein>
<evidence type="ECO:0000255" key="1">
    <source>
        <dbReference type="HAMAP-Rule" id="MF_01377"/>
    </source>
</evidence>
<proteinExistence type="inferred from homology"/>
<reference key="1">
    <citation type="journal article" date="2006" name="J. Bacteriol.">
        <title>Complete genome sequence of Yersinia pestis strains Antiqua and Nepal516: evidence of gene reduction in an emerging pathogen.</title>
        <authorList>
            <person name="Chain P.S.G."/>
            <person name="Hu P."/>
            <person name="Malfatti S.A."/>
            <person name="Radnedge L."/>
            <person name="Larimer F."/>
            <person name="Vergez L.M."/>
            <person name="Worsham P."/>
            <person name="Chu M.C."/>
            <person name="Andersen G.L."/>
        </authorList>
    </citation>
    <scope>NUCLEOTIDE SEQUENCE [LARGE SCALE GENOMIC DNA]</scope>
    <source>
        <strain>Antiqua</strain>
    </source>
</reference>
<feature type="chain" id="PRO_0000292172" description="Probable lipid kinase YegS-like">
    <location>
        <begin position="1"/>
        <end position="296"/>
    </location>
</feature>
<feature type="domain" description="DAGKc" evidence="1">
    <location>
        <begin position="1"/>
        <end position="130"/>
    </location>
</feature>
<feature type="active site" description="Proton acceptor" evidence="1">
    <location>
        <position position="268"/>
    </location>
</feature>
<feature type="binding site" evidence="1">
    <location>
        <position position="37"/>
    </location>
    <ligand>
        <name>ATP</name>
        <dbReference type="ChEBI" id="CHEBI:30616"/>
    </ligand>
</feature>
<feature type="binding site" evidence="1">
    <location>
        <begin position="63"/>
        <end position="69"/>
    </location>
    <ligand>
        <name>ATP</name>
        <dbReference type="ChEBI" id="CHEBI:30616"/>
    </ligand>
</feature>
<feature type="binding site" evidence="1">
    <location>
        <position position="92"/>
    </location>
    <ligand>
        <name>ATP</name>
        <dbReference type="ChEBI" id="CHEBI:30616"/>
    </ligand>
</feature>
<feature type="binding site" evidence="1">
    <location>
        <position position="212"/>
    </location>
    <ligand>
        <name>Mg(2+)</name>
        <dbReference type="ChEBI" id="CHEBI:18420"/>
    </ligand>
</feature>
<feature type="binding site" evidence="1">
    <location>
        <position position="215"/>
    </location>
    <ligand>
        <name>Mg(2+)</name>
        <dbReference type="ChEBI" id="CHEBI:18420"/>
    </ligand>
</feature>
<feature type="binding site" evidence="1">
    <location>
        <position position="217"/>
    </location>
    <ligand>
        <name>Mg(2+)</name>
        <dbReference type="ChEBI" id="CHEBI:18420"/>
    </ligand>
</feature>
<name>YEGS_YERPA</name>
<sequence>MPHTLLILNGKESGNPEVREAVKNVRDEGLTLHVRITWEHGDAKRYVEEAATLAVSTVIAGGGDGTINEVATALMSLPADKRPCLGILPLGTANDFATGCNIPLQIENALQLAVKGRAVAIDLAQVNGEHYFINMATGGFGTRITTETPDKLKAALGGVSYFIHGLMRLDALKADSCKIHGPDFHWSGDALVIGIGNGKQAGGGQLLCPDALINDGLMQLRLLTAKELLPAVLSTLFNGEKNKNVIDATVPWLDITAPNDITFNLDGEPLSGRHFHIEILPHAIQCRLPPNCPLLG</sequence>
<organism>
    <name type="scientific">Yersinia pestis bv. Antiqua (strain Antiqua)</name>
    <dbReference type="NCBI Taxonomy" id="360102"/>
    <lineage>
        <taxon>Bacteria</taxon>
        <taxon>Pseudomonadati</taxon>
        <taxon>Pseudomonadota</taxon>
        <taxon>Gammaproteobacteria</taxon>
        <taxon>Enterobacterales</taxon>
        <taxon>Yersiniaceae</taxon>
        <taxon>Yersinia</taxon>
    </lineage>
</organism>
<comment type="function">
    <text evidence="1">Probably phosphorylates lipids; the in vivo substrate is unknown.</text>
</comment>
<comment type="cofactor">
    <cofactor evidence="1">
        <name>Mg(2+)</name>
        <dbReference type="ChEBI" id="CHEBI:18420"/>
    </cofactor>
    <cofactor evidence="1">
        <name>Ca(2+)</name>
        <dbReference type="ChEBI" id="CHEBI:29108"/>
    </cofactor>
    <text evidence="1">Binds 1 Mg(2+) ion per subunit. Ca(2+) may be able to substitute.</text>
</comment>
<comment type="subcellular location">
    <subcellularLocation>
        <location evidence="1">Cytoplasm</location>
    </subcellularLocation>
</comment>
<comment type="similarity">
    <text evidence="1">Belongs to the diacylglycerol/lipid kinase family. YegS lipid kinase subfamily.</text>
</comment>
<dbReference type="EC" id="2.7.1.-" evidence="1"/>
<dbReference type="EMBL" id="CP000308">
    <property type="protein sequence ID" value="ABG14260.1"/>
    <property type="molecule type" value="Genomic_DNA"/>
</dbReference>
<dbReference type="SMR" id="Q1C5L2"/>
<dbReference type="KEGG" id="ypa:YPA_2295"/>
<dbReference type="Proteomes" id="UP000001971">
    <property type="component" value="Chromosome"/>
</dbReference>
<dbReference type="GO" id="GO:0005737">
    <property type="term" value="C:cytoplasm"/>
    <property type="evidence" value="ECO:0007669"/>
    <property type="project" value="UniProtKB-SubCell"/>
</dbReference>
<dbReference type="GO" id="GO:0005886">
    <property type="term" value="C:plasma membrane"/>
    <property type="evidence" value="ECO:0007669"/>
    <property type="project" value="TreeGrafter"/>
</dbReference>
<dbReference type="GO" id="GO:0005524">
    <property type="term" value="F:ATP binding"/>
    <property type="evidence" value="ECO:0007669"/>
    <property type="project" value="UniProtKB-UniRule"/>
</dbReference>
<dbReference type="GO" id="GO:0001727">
    <property type="term" value="F:lipid kinase activity"/>
    <property type="evidence" value="ECO:0007669"/>
    <property type="project" value="UniProtKB-UniRule"/>
</dbReference>
<dbReference type="GO" id="GO:0000287">
    <property type="term" value="F:magnesium ion binding"/>
    <property type="evidence" value="ECO:0007669"/>
    <property type="project" value="UniProtKB-UniRule"/>
</dbReference>
<dbReference type="GO" id="GO:0008654">
    <property type="term" value="P:phospholipid biosynthetic process"/>
    <property type="evidence" value="ECO:0007669"/>
    <property type="project" value="UniProtKB-UniRule"/>
</dbReference>
<dbReference type="Gene3D" id="2.60.200.40">
    <property type="match status" value="1"/>
</dbReference>
<dbReference type="Gene3D" id="3.40.50.10330">
    <property type="entry name" value="Probable inorganic polyphosphate/atp-NAD kinase, domain 1"/>
    <property type="match status" value="1"/>
</dbReference>
<dbReference type="HAMAP" id="MF_01377">
    <property type="entry name" value="YegS"/>
    <property type="match status" value="1"/>
</dbReference>
<dbReference type="InterPro" id="IPR017438">
    <property type="entry name" value="ATP-NAD_kinase_N"/>
</dbReference>
<dbReference type="InterPro" id="IPR005218">
    <property type="entry name" value="Diacylglycerol/lipid_kinase"/>
</dbReference>
<dbReference type="InterPro" id="IPR001206">
    <property type="entry name" value="Diacylglycerol_kinase_cat_dom"/>
</dbReference>
<dbReference type="InterPro" id="IPR022433">
    <property type="entry name" value="Lip_kinase_YegS"/>
</dbReference>
<dbReference type="InterPro" id="IPR050187">
    <property type="entry name" value="Lipid_Phosphate_FormReg"/>
</dbReference>
<dbReference type="InterPro" id="IPR016064">
    <property type="entry name" value="NAD/diacylglycerol_kinase_sf"/>
</dbReference>
<dbReference type="InterPro" id="IPR045540">
    <property type="entry name" value="YegS/DAGK_C"/>
</dbReference>
<dbReference type="NCBIfam" id="TIGR03702">
    <property type="entry name" value="lip_kinase_YegS"/>
    <property type="match status" value="1"/>
</dbReference>
<dbReference type="NCBIfam" id="NF009602">
    <property type="entry name" value="PRK13054.1"/>
    <property type="match status" value="1"/>
</dbReference>
<dbReference type="NCBIfam" id="TIGR00147">
    <property type="entry name" value="YegS/Rv2252/BmrU family lipid kinase"/>
    <property type="match status" value="1"/>
</dbReference>
<dbReference type="PANTHER" id="PTHR12358:SF106">
    <property type="entry name" value="LIPID KINASE YEGS"/>
    <property type="match status" value="1"/>
</dbReference>
<dbReference type="PANTHER" id="PTHR12358">
    <property type="entry name" value="SPHINGOSINE KINASE"/>
    <property type="match status" value="1"/>
</dbReference>
<dbReference type="Pfam" id="PF00781">
    <property type="entry name" value="DAGK_cat"/>
    <property type="match status" value="1"/>
</dbReference>
<dbReference type="Pfam" id="PF19279">
    <property type="entry name" value="YegS_C"/>
    <property type="match status" value="1"/>
</dbReference>
<dbReference type="SMART" id="SM00046">
    <property type="entry name" value="DAGKc"/>
    <property type="match status" value="1"/>
</dbReference>
<dbReference type="SUPFAM" id="SSF111331">
    <property type="entry name" value="NAD kinase/diacylglycerol kinase-like"/>
    <property type="match status" value="1"/>
</dbReference>
<dbReference type="PROSITE" id="PS50146">
    <property type="entry name" value="DAGK"/>
    <property type="match status" value="1"/>
</dbReference>
<keyword id="KW-0067">ATP-binding</keyword>
<keyword id="KW-0963">Cytoplasm</keyword>
<keyword id="KW-0418">Kinase</keyword>
<keyword id="KW-0444">Lipid biosynthesis</keyword>
<keyword id="KW-0443">Lipid metabolism</keyword>
<keyword id="KW-0460">Magnesium</keyword>
<keyword id="KW-0479">Metal-binding</keyword>
<keyword id="KW-0547">Nucleotide-binding</keyword>
<keyword id="KW-0594">Phospholipid biosynthesis</keyword>
<keyword id="KW-1208">Phospholipid metabolism</keyword>
<keyword id="KW-0808">Transferase</keyword>